<organism>
    <name type="scientific">Saccharomyces cerevisiae (strain ATCC 204508 / S288c)</name>
    <name type="common">Baker's yeast</name>
    <dbReference type="NCBI Taxonomy" id="559292"/>
    <lineage>
        <taxon>Eukaryota</taxon>
        <taxon>Fungi</taxon>
        <taxon>Dikarya</taxon>
        <taxon>Ascomycota</taxon>
        <taxon>Saccharomycotina</taxon>
        <taxon>Saccharomycetes</taxon>
        <taxon>Saccharomycetales</taxon>
        <taxon>Saccharomycetaceae</taxon>
        <taxon>Saccharomyces</taxon>
    </lineage>
</organism>
<name>MPC3_YEAST</name>
<evidence type="ECO:0000255" key="1"/>
<evidence type="ECO:0000269" key="2">
    <source>
    </source>
</evidence>
<evidence type="ECO:0000269" key="3">
    <source>
    </source>
</evidence>
<evidence type="ECO:0000269" key="4">
    <source>
    </source>
</evidence>
<evidence type="ECO:0000269" key="5">
    <source>
    </source>
</evidence>
<evidence type="ECO:0000269" key="6">
    <source>
    </source>
</evidence>
<evidence type="ECO:0000269" key="7">
    <source>
    </source>
</evidence>
<evidence type="ECO:0000269" key="8">
    <source>
    </source>
</evidence>
<evidence type="ECO:0000269" key="9">
    <source>
    </source>
</evidence>
<evidence type="ECO:0000303" key="10">
    <source>
    </source>
</evidence>
<evidence type="ECO:0000303" key="11">
    <source>
    </source>
</evidence>
<evidence type="ECO:0000303" key="12">
    <source>
    </source>
</evidence>
<evidence type="ECO:0000305" key="13"/>
<evidence type="ECO:0000312" key="14">
    <source>
        <dbReference type="SGD" id="S000003475"/>
    </source>
</evidence>
<comment type="function">
    <text evidence="8 9">Mediates the uptake of pyruvate into mitochondria.</text>
</comment>
<comment type="subunit">
    <text evidence="8 9">The functional 150 kDa pyruvate import complex is a heteromer of MPC1 and either MPC2 or MPC3.</text>
</comment>
<comment type="interaction">
    <interactant intactId="EBI-23568">
        <id>P53311</id>
    </interactant>
    <interactant intactId="EBI-23845">
        <id>P53157</id>
        <label>MPC1</label>
    </interactant>
    <organismsDiffer>false</organismsDiffer>
    <experiments>5</experiments>
</comment>
<comment type="subcellular location">
    <subcellularLocation>
        <location evidence="2 4">Mitochondrion</location>
    </subcellularLocation>
    <subcellularLocation>
        <location evidence="9">Mitochondrion inner membrane</location>
        <topology evidence="1">Multi-pass membrane protein</topology>
    </subcellularLocation>
</comment>
<comment type="induction">
    <text evidence="5 6 7 8">Mainly expressed when grown on lactate containing growth medium (PubMed:22628554). Expression regulated by osmotic and alkaline stresses (PubMed:15299026, PubMed:16087739, PubMed:17334841). Under the control of the SKO1 transcription factor (PubMed:16087739).</text>
</comment>
<comment type="disruption phenotype">
    <text evidence="8">Grows more slowly in amino acid-free medium (SD), when combined with disruption of MPC2.</text>
</comment>
<comment type="miscellaneous">
    <text evidence="3">Present with 6750 molecules/cell in log phase SD medium.</text>
</comment>
<comment type="similarity">
    <text evidence="13">Belongs to the mitochondrial pyruvate carrier (MPC) (TC 2.A.105) family.</text>
</comment>
<accession>P53311</accession>
<accession>D6VV23</accession>
<keyword id="KW-0472">Membrane</keyword>
<keyword id="KW-0496">Mitochondrion</keyword>
<keyword id="KW-0999">Mitochondrion inner membrane</keyword>
<keyword id="KW-1185">Reference proteome</keyword>
<keyword id="KW-0346">Stress response</keyword>
<keyword id="KW-0809">Transit peptide</keyword>
<keyword id="KW-0812">Transmembrane</keyword>
<keyword id="KW-1133">Transmembrane helix</keyword>
<keyword id="KW-0813">Transport</keyword>
<reference key="1">
    <citation type="journal article" date="1997" name="Yeast">
        <title>Sequencing of a 9.9 kb segment on the right arm of yeast chromosome VII reveals four open reading frames, including PFK1, the gene coding for succinyl-CoA synthetase (beta-chain) and two ORFs sharing homology with ORFs of the yeast chromosome VIII.</title>
        <authorList>
            <person name="Guerreiro P."/>
            <person name="Azevedo D."/>
            <person name="Barreiros T."/>
            <person name="Rodrigues-Pousada C."/>
        </authorList>
    </citation>
    <scope>NUCLEOTIDE SEQUENCE [GENOMIC DNA]</scope>
    <source>
        <strain>ATCC 204508 / S288c</strain>
    </source>
</reference>
<reference key="2">
    <citation type="journal article" date="1997" name="Nature">
        <title>The nucleotide sequence of Saccharomyces cerevisiae chromosome VII.</title>
        <authorList>
            <person name="Tettelin H."/>
            <person name="Agostoni-Carbone M.L."/>
            <person name="Albermann K."/>
            <person name="Albers M."/>
            <person name="Arroyo J."/>
            <person name="Backes U."/>
            <person name="Barreiros T."/>
            <person name="Bertani I."/>
            <person name="Bjourson A.J."/>
            <person name="Brueckner M."/>
            <person name="Bruschi C.V."/>
            <person name="Carignani G."/>
            <person name="Castagnoli L."/>
            <person name="Cerdan E."/>
            <person name="Clemente M.L."/>
            <person name="Coblenz A."/>
            <person name="Coglievina M."/>
            <person name="Coissac E."/>
            <person name="Defoor E."/>
            <person name="Del Bino S."/>
            <person name="Delius H."/>
            <person name="Delneri D."/>
            <person name="de Wergifosse P."/>
            <person name="Dujon B."/>
            <person name="Durand P."/>
            <person name="Entian K.-D."/>
            <person name="Eraso P."/>
            <person name="Escribano V."/>
            <person name="Fabiani L."/>
            <person name="Fartmann B."/>
            <person name="Feroli F."/>
            <person name="Feuermann M."/>
            <person name="Frontali L."/>
            <person name="Garcia-Gonzalez M."/>
            <person name="Garcia-Saez M.I."/>
            <person name="Goffeau A."/>
            <person name="Guerreiro P."/>
            <person name="Hani J."/>
            <person name="Hansen M."/>
            <person name="Hebling U."/>
            <person name="Hernandez K."/>
            <person name="Heumann K."/>
            <person name="Hilger F."/>
            <person name="Hofmann B."/>
            <person name="Indge K.J."/>
            <person name="James C.M."/>
            <person name="Klima R."/>
            <person name="Koetter P."/>
            <person name="Kramer B."/>
            <person name="Kramer W."/>
            <person name="Lauquin G."/>
            <person name="Leuther H."/>
            <person name="Louis E.J."/>
            <person name="Maillier E."/>
            <person name="Marconi A."/>
            <person name="Martegani E."/>
            <person name="Mazon M.J."/>
            <person name="Mazzoni C."/>
            <person name="McReynolds A.D.K."/>
            <person name="Melchioretto P."/>
            <person name="Mewes H.-W."/>
            <person name="Minenkova O."/>
            <person name="Mueller-Auer S."/>
            <person name="Nawrocki A."/>
            <person name="Netter P."/>
            <person name="Neu R."/>
            <person name="Nombela C."/>
            <person name="Oliver S.G."/>
            <person name="Panzeri L."/>
            <person name="Paoluzi S."/>
            <person name="Plevani P."/>
            <person name="Portetelle D."/>
            <person name="Portillo F."/>
            <person name="Potier S."/>
            <person name="Purnelle B."/>
            <person name="Rieger M."/>
            <person name="Riles L."/>
            <person name="Rinaldi T."/>
            <person name="Robben J."/>
            <person name="Rodrigues-Pousada C."/>
            <person name="Rodriguez-Belmonte E."/>
            <person name="Rodriguez-Torres A.M."/>
            <person name="Rose M."/>
            <person name="Ruzzi M."/>
            <person name="Saliola M."/>
            <person name="Sanchez-Perez M."/>
            <person name="Schaefer B."/>
            <person name="Schaefer M."/>
            <person name="Scharfe M."/>
            <person name="Schmidheini T."/>
            <person name="Schreer A."/>
            <person name="Skala J."/>
            <person name="Souciet J.-L."/>
            <person name="Steensma H.Y."/>
            <person name="Talla E."/>
            <person name="Thierry A."/>
            <person name="Vandenbol M."/>
            <person name="van der Aart Q.J.M."/>
            <person name="Van Dyck L."/>
            <person name="Vanoni M."/>
            <person name="Verhasselt P."/>
            <person name="Voet M."/>
            <person name="Volckaert G."/>
            <person name="Wambutt R."/>
            <person name="Watson M.D."/>
            <person name="Weber N."/>
            <person name="Wedler E."/>
            <person name="Wedler H."/>
            <person name="Wipfli P."/>
            <person name="Wolf K."/>
            <person name="Wright L.F."/>
            <person name="Zaccaria P."/>
            <person name="Zimmermann M."/>
            <person name="Zollner A."/>
            <person name="Kleine K."/>
        </authorList>
    </citation>
    <scope>NUCLEOTIDE SEQUENCE [LARGE SCALE GENOMIC DNA]</scope>
    <source>
        <strain>ATCC 204508 / S288c</strain>
    </source>
</reference>
<reference key="3">
    <citation type="journal article" date="2014" name="G3 (Bethesda)">
        <title>The reference genome sequence of Saccharomyces cerevisiae: Then and now.</title>
        <authorList>
            <person name="Engel S.R."/>
            <person name="Dietrich F.S."/>
            <person name="Fisk D.G."/>
            <person name="Binkley G."/>
            <person name="Balakrishnan R."/>
            <person name="Costanzo M.C."/>
            <person name="Dwight S.S."/>
            <person name="Hitz B.C."/>
            <person name="Karra K."/>
            <person name="Nash R.S."/>
            <person name="Weng S."/>
            <person name="Wong E.D."/>
            <person name="Lloyd P."/>
            <person name="Skrzypek M.S."/>
            <person name="Miyasato S.R."/>
            <person name="Simison M."/>
            <person name="Cherry J.M."/>
        </authorList>
    </citation>
    <scope>GENOME REANNOTATION</scope>
    <source>
        <strain>ATCC 204508 / S288c</strain>
    </source>
</reference>
<reference key="4">
    <citation type="journal article" date="2007" name="Genome Res.">
        <title>Approaching a complete repository of sequence-verified protein-encoding clones for Saccharomyces cerevisiae.</title>
        <authorList>
            <person name="Hu Y."/>
            <person name="Rolfs A."/>
            <person name="Bhullar B."/>
            <person name="Murthy T.V.S."/>
            <person name="Zhu C."/>
            <person name="Berger M.F."/>
            <person name="Camargo A.A."/>
            <person name="Kelley F."/>
            <person name="McCarron S."/>
            <person name="Jepson D."/>
            <person name="Richardson A."/>
            <person name="Raphael J."/>
            <person name="Moreira D."/>
            <person name="Taycher E."/>
            <person name="Zuo D."/>
            <person name="Mohr S."/>
            <person name="Kane M.F."/>
            <person name="Williamson J."/>
            <person name="Simpson A.J.G."/>
            <person name="Bulyk M.L."/>
            <person name="Harlow E."/>
            <person name="Marsischky G."/>
            <person name="Kolodner R.D."/>
            <person name="LaBaer J."/>
        </authorList>
    </citation>
    <scope>NUCLEOTIDE SEQUENCE [GENOMIC DNA]</scope>
    <source>
        <strain>ATCC 204508 / S288c</strain>
    </source>
</reference>
<reference key="5">
    <citation type="journal article" date="2003" name="Nature">
        <title>Global analysis of protein localization in budding yeast.</title>
        <authorList>
            <person name="Huh W.-K."/>
            <person name="Falvo J.V."/>
            <person name="Gerke L.C."/>
            <person name="Carroll A.S."/>
            <person name="Howson R.W."/>
            <person name="Weissman J.S."/>
            <person name="O'Shea E.K."/>
        </authorList>
    </citation>
    <scope>SUBCELLULAR LOCATION [LARGE SCALE ANALYSIS]</scope>
</reference>
<reference key="6">
    <citation type="journal article" date="2003" name="Nature">
        <title>Global analysis of protein expression in yeast.</title>
        <authorList>
            <person name="Ghaemmaghami S."/>
            <person name="Huh W.-K."/>
            <person name="Bower K."/>
            <person name="Howson R.W."/>
            <person name="Belle A."/>
            <person name="Dephoure N."/>
            <person name="O'Shea E.K."/>
            <person name="Weissman J.S."/>
        </authorList>
    </citation>
    <scope>LEVEL OF PROTEIN EXPRESSION [LARGE SCALE ANALYSIS]</scope>
</reference>
<reference key="7">
    <citation type="journal article" date="2003" name="Proc. Natl. Acad. Sci. U.S.A.">
        <title>The proteome of Saccharomyces cerevisiae mitochondria.</title>
        <authorList>
            <person name="Sickmann A."/>
            <person name="Reinders J."/>
            <person name="Wagner Y."/>
            <person name="Joppich C."/>
            <person name="Zahedi R.P."/>
            <person name="Meyer H.E."/>
            <person name="Schoenfisch B."/>
            <person name="Perschil I."/>
            <person name="Chacinska A."/>
            <person name="Guiard B."/>
            <person name="Rehling P."/>
            <person name="Pfanner N."/>
            <person name="Meisinger C."/>
        </authorList>
    </citation>
    <scope>SUBCELLULAR LOCATION [LARGE SCALE ANALYSIS]</scope>
    <source>
        <strain>ATCC 76625 / YPH499</strain>
    </source>
</reference>
<reference key="8">
    <citation type="journal article" date="2004" name="J. Biol. Chem.">
        <title>Characterization of the calcium-mediated response to alkaline stress in Saccharomyces cerevisiae.</title>
        <authorList>
            <person name="Viladevall L."/>
            <person name="Serrano R."/>
            <person name="Ruiz A."/>
            <person name="Domenech G."/>
            <person name="Giraldo J."/>
            <person name="Barcelo A."/>
            <person name="Arino J."/>
        </authorList>
    </citation>
    <scope>INDUCTION</scope>
</reference>
<reference key="9">
    <citation type="journal article" date="2005" name="Eukaryot. Cell">
        <title>Genomewide identification of Sko1 target promoters reveals a regulatory network that operates in response to osmotic stress in Saccharomyces cerevisiae.</title>
        <authorList>
            <person name="Proft M."/>
            <person name="Gibbons F.D."/>
            <person name="Copeland M."/>
            <person name="Roth F.P."/>
            <person name="Struhl K."/>
        </authorList>
    </citation>
    <scope>INDUCTION</scope>
</reference>
<reference key="10">
    <citation type="journal article" date="2007" name="Curr. Microbiol.">
        <title>Genetic and comparative transcriptome analysis of bromodomain factor 1 in the salt stress response of Saccharomyces cerevisiae.</title>
        <authorList>
            <person name="Liu X."/>
            <person name="Zhang X."/>
            <person name="Wang C."/>
            <person name="Liu L."/>
            <person name="Lei M."/>
            <person name="Bao X."/>
        </authorList>
    </citation>
    <scope>INDUCTION</scope>
</reference>
<reference key="11">
    <citation type="journal article" date="2012" name="Science">
        <title>Identification and functional expression of the mitochondrial pyruvate carrier.</title>
        <authorList>
            <person name="Herzig S."/>
            <person name="Raemy E."/>
            <person name="Montessuit S."/>
            <person name="Veuthey J.L."/>
            <person name="Zamboni N."/>
            <person name="Westermann B."/>
            <person name="Kunji E.R."/>
            <person name="Martinou J.C."/>
        </authorList>
    </citation>
    <scope>FUNCTION</scope>
    <scope>SUBUNIT</scope>
    <scope>DISRUPTION PHENOTYPE</scope>
    <scope>INDUCTION</scope>
</reference>
<reference key="12">
    <citation type="journal article" date="2012" name="Science">
        <title>A mitochondrial pyruvate carrier required for pyruvate uptake in yeast, Drosophila, and humans.</title>
        <authorList>
            <person name="Bricker D.K."/>
            <person name="Taylor E.B."/>
            <person name="Schell J.C."/>
            <person name="Orsak T."/>
            <person name="Boutron A."/>
            <person name="Chen Y.C."/>
            <person name="Cox J.E."/>
            <person name="Cardon C.M."/>
            <person name="Van Vranken J.G."/>
            <person name="Dephoure N."/>
            <person name="Redin C."/>
            <person name="Boudina S."/>
            <person name="Gygi S.P."/>
            <person name="Brivet M."/>
            <person name="Thummel C.S."/>
            <person name="Rutter J."/>
        </authorList>
    </citation>
    <scope>FUNCTION</scope>
    <scope>SUBCELLULAR LOCATION</scope>
    <scope>SUBUNIT</scope>
</reference>
<proteinExistence type="evidence at protein level"/>
<gene>
    <name evidence="11 12" type="primary">MPC3</name>
    <name evidence="10" type="synonym">FMP43</name>
    <name evidence="14" type="ordered locus">YGR243W</name>
    <name type="ORF">G8620</name>
</gene>
<sequence length="146" mass="16230">MSASAFNFAFRRFWNSETGPKTVHFWAPTLKWGLVFAGLNDIKRPVEKVSGAQNLSLLATALIWTRWSFVIKPKNYLLASVNFFLGCTAGYHLTRIANFRIRNGDSFKQVIHYIIKGETPAAVAAKQTASTSMNKGVIGTNPPITH</sequence>
<feature type="transit peptide" description="Mitochondrion" evidence="1">
    <location>
        <begin position="1"/>
        <end position="20"/>
    </location>
</feature>
<feature type="chain" id="PRO_0000212800" description="Mitochondrial pyruvate carrier 3">
    <location>
        <begin position="21"/>
        <end position="146"/>
    </location>
</feature>
<feature type="transmembrane region" description="Helical" evidence="1">
    <location>
        <begin position="23"/>
        <end position="39"/>
    </location>
</feature>
<feature type="transmembrane region" description="Helical" evidence="1">
    <location>
        <begin position="55"/>
        <end position="71"/>
    </location>
</feature>
<feature type="transmembrane region" description="Helical" evidence="1">
    <location>
        <begin position="78"/>
        <end position="94"/>
    </location>
</feature>
<protein>
    <recommendedName>
        <fullName evidence="11 12">Mitochondrial pyruvate carrier 3</fullName>
        <shortName evidence="11 12">MPC3</shortName>
    </recommendedName>
    <alternativeName>
        <fullName evidence="10">Protein FMP43</fullName>
    </alternativeName>
</protein>
<dbReference type="EMBL" id="Z73028">
    <property type="protein sequence ID" value="CAA97272.1"/>
    <property type="molecule type" value="Genomic_DNA"/>
</dbReference>
<dbReference type="EMBL" id="AY558546">
    <property type="protein sequence ID" value="AAS56872.1"/>
    <property type="molecule type" value="Genomic_DNA"/>
</dbReference>
<dbReference type="EMBL" id="BK006941">
    <property type="protein sequence ID" value="DAA08334.1"/>
    <property type="molecule type" value="Genomic_DNA"/>
</dbReference>
<dbReference type="PIR" id="S64569">
    <property type="entry name" value="S64569"/>
</dbReference>
<dbReference type="RefSeq" id="NP_011759.1">
    <property type="nucleotide sequence ID" value="NM_001181372.1"/>
</dbReference>
<dbReference type="BioGRID" id="33494">
    <property type="interactions" value="89"/>
</dbReference>
<dbReference type="ComplexPortal" id="CPX-303">
    <property type="entry name" value="Mitochondrial pyruvate carrier, respiratory isoform"/>
</dbReference>
<dbReference type="DIP" id="DIP-2027N"/>
<dbReference type="FunCoup" id="P53311">
    <property type="interactions" value="377"/>
</dbReference>
<dbReference type="IntAct" id="P53311">
    <property type="interactions" value="2"/>
</dbReference>
<dbReference type="STRING" id="4932.YGR243W"/>
<dbReference type="TCDB" id="2.A.105.1.1">
    <property type="family name" value="the mitochondrial pyruvate carrier (mpc) family"/>
</dbReference>
<dbReference type="PaxDb" id="4932-YGR243W"/>
<dbReference type="PeptideAtlas" id="P53311"/>
<dbReference type="EnsemblFungi" id="YGR243W_mRNA">
    <property type="protein sequence ID" value="YGR243W"/>
    <property type="gene ID" value="YGR243W"/>
</dbReference>
<dbReference type="GeneID" id="853158"/>
<dbReference type="KEGG" id="sce:YGR243W"/>
<dbReference type="AGR" id="SGD:S000003475"/>
<dbReference type="SGD" id="S000003475">
    <property type="gene designation" value="MPC3"/>
</dbReference>
<dbReference type="VEuPathDB" id="FungiDB:YGR243W"/>
<dbReference type="eggNOG" id="KOG1589">
    <property type="taxonomic scope" value="Eukaryota"/>
</dbReference>
<dbReference type="GeneTree" id="ENSGT00510000047120"/>
<dbReference type="HOGENOM" id="CLU_099502_1_0_1"/>
<dbReference type="InParanoid" id="P53311"/>
<dbReference type="OMA" id="PQQFAIC"/>
<dbReference type="OrthoDB" id="869189at2759"/>
<dbReference type="BioCyc" id="YEAST:G3O-30919-MONOMER"/>
<dbReference type="BioGRID-ORCS" id="853158">
    <property type="hits" value="4 hits in 10 CRISPR screens"/>
</dbReference>
<dbReference type="PRO" id="PR:P53311"/>
<dbReference type="Proteomes" id="UP000002311">
    <property type="component" value="Chromosome VII"/>
</dbReference>
<dbReference type="RNAct" id="P53311">
    <property type="molecule type" value="protein"/>
</dbReference>
<dbReference type="GO" id="GO:0098800">
    <property type="term" value="C:inner mitochondrial membrane protein complex"/>
    <property type="evidence" value="ECO:0000314"/>
    <property type="project" value="ComplexPortal"/>
</dbReference>
<dbReference type="GO" id="GO:0005743">
    <property type="term" value="C:mitochondrial inner membrane"/>
    <property type="evidence" value="ECO:0000318"/>
    <property type="project" value="GO_Central"/>
</dbReference>
<dbReference type="GO" id="GO:0031966">
    <property type="term" value="C:mitochondrial membrane"/>
    <property type="evidence" value="ECO:0000314"/>
    <property type="project" value="SGD"/>
</dbReference>
<dbReference type="GO" id="GO:0005739">
    <property type="term" value="C:mitochondrion"/>
    <property type="evidence" value="ECO:0007005"/>
    <property type="project" value="SGD"/>
</dbReference>
<dbReference type="GO" id="GO:0050833">
    <property type="term" value="F:pyruvate transmembrane transporter activity"/>
    <property type="evidence" value="ECO:0000314"/>
    <property type="project" value="SGD"/>
</dbReference>
<dbReference type="GO" id="GO:0006850">
    <property type="term" value="P:mitochondrial pyruvate transmembrane transport"/>
    <property type="evidence" value="ECO:0000314"/>
    <property type="project" value="ComplexPortal"/>
</dbReference>
<dbReference type="InterPro" id="IPR005336">
    <property type="entry name" value="MPC"/>
</dbReference>
<dbReference type="PANTHER" id="PTHR14154">
    <property type="entry name" value="UPF0041 BRAIN PROTEIN 44-RELATED"/>
    <property type="match status" value="1"/>
</dbReference>
<dbReference type="Pfam" id="PF03650">
    <property type="entry name" value="MPC"/>
    <property type="match status" value="1"/>
</dbReference>